<protein>
    <recommendedName>
        <fullName>Signal peptidase complex catalytic subunit SEC11</fullName>
        <ecNumber evidence="1">3.4.21.89</ecNumber>
    </recommendedName>
    <alternativeName>
        <fullName>Signal peptidase I</fullName>
    </alternativeName>
</protein>
<feature type="chain" id="PRO_0000412328" description="Signal peptidase complex catalytic subunit SEC11">
    <location>
        <begin position="1"/>
        <end position="167"/>
    </location>
</feature>
<feature type="topological domain" description="Cytoplasmic" evidence="3">
    <location>
        <begin position="1"/>
        <end position="12"/>
    </location>
</feature>
<feature type="transmembrane region" description="Helical; Signal-anchor for type II membrane protein" evidence="3">
    <location>
        <begin position="13"/>
        <end position="30"/>
    </location>
</feature>
<feature type="topological domain" description="Lumenal" evidence="3">
    <location>
        <begin position="31"/>
        <end position="167"/>
    </location>
</feature>
<feature type="region of interest" description="C-terminal short (CTS) helix" evidence="2">
    <location>
        <begin position="153"/>
        <end position="164"/>
    </location>
</feature>
<feature type="active site" description="Charge relay system" evidence="1">
    <location>
        <position position="44"/>
    </location>
</feature>
<feature type="active site" description="Charge relay system" evidence="1">
    <location>
        <position position="83"/>
    </location>
</feature>
<feature type="active site" description="Charge relay system" evidence="1">
    <location>
        <position position="109"/>
    </location>
</feature>
<name>SEC11_DEBHA</name>
<dbReference type="EC" id="3.4.21.89" evidence="1"/>
<dbReference type="EMBL" id="CR382137">
    <property type="protein sequence ID" value="CAG88313.2"/>
    <property type="molecule type" value="Genomic_DNA"/>
</dbReference>
<dbReference type="RefSeq" id="XP_460055.2">
    <property type="nucleotide sequence ID" value="XM_460055.1"/>
</dbReference>
<dbReference type="SMR" id="Q6BP15"/>
<dbReference type="FunCoup" id="Q6BP15">
    <property type="interactions" value="700"/>
</dbReference>
<dbReference type="STRING" id="284592.Q6BP15"/>
<dbReference type="MEROPS" id="S26.010"/>
<dbReference type="GeneID" id="2902976"/>
<dbReference type="KEGG" id="dha:DEHA2E17314g"/>
<dbReference type="VEuPathDB" id="FungiDB:DEHA2E17314g"/>
<dbReference type="eggNOG" id="KOG3342">
    <property type="taxonomic scope" value="Eukaryota"/>
</dbReference>
<dbReference type="HOGENOM" id="CLU_089996_0_0_1"/>
<dbReference type="InParanoid" id="Q6BP15"/>
<dbReference type="OMA" id="ILMNEYP"/>
<dbReference type="OrthoDB" id="10257561at2759"/>
<dbReference type="Proteomes" id="UP000000599">
    <property type="component" value="Chromosome E"/>
</dbReference>
<dbReference type="GO" id="GO:0005787">
    <property type="term" value="C:signal peptidase complex"/>
    <property type="evidence" value="ECO:0007669"/>
    <property type="project" value="EnsemblFungi"/>
</dbReference>
<dbReference type="GO" id="GO:0004252">
    <property type="term" value="F:serine-type endopeptidase activity"/>
    <property type="evidence" value="ECO:0007669"/>
    <property type="project" value="UniProtKB-EC"/>
</dbReference>
<dbReference type="GO" id="GO:0045047">
    <property type="term" value="P:protein targeting to ER"/>
    <property type="evidence" value="ECO:0007669"/>
    <property type="project" value="EnsemblFungi"/>
</dbReference>
<dbReference type="GO" id="GO:0006465">
    <property type="term" value="P:signal peptide processing"/>
    <property type="evidence" value="ECO:0007669"/>
    <property type="project" value="EnsemblFungi"/>
</dbReference>
<dbReference type="CDD" id="cd06530">
    <property type="entry name" value="S26_SPase_I"/>
    <property type="match status" value="1"/>
</dbReference>
<dbReference type="InterPro" id="IPR036286">
    <property type="entry name" value="LexA/Signal_pep-like_sf"/>
</dbReference>
<dbReference type="InterPro" id="IPR019758">
    <property type="entry name" value="Pept_S26A_signal_pept_1_CS"/>
</dbReference>
<dbReference type="InterPro" id="IPR019756">
    <property type="entry name" value="Pept_S26A_signal_pept_1_Ser-AS"/>
</dbReference>
<dbReference type="InterPro" id="IPR015927">
    <property type="entry name" value="Peptidase_S24_S26A/B/C"/>
</dbReference>
<dbReference type="InterPro" id="IPR019533">
    <property type="entry name" value="Peptidase_S26"/>
</dbReference>
<dbReference type="InterPro" id="IPR001733">
    <property type="entry name" value="Peptidase_S26B"/>
</dbReference>
<dbReference type="NCBIfam" id="TIGR02228">
    <property type="entry name" value="sigpep_I_arch"/>
    <property type="match status" value="1"/>
</dbReference>
<dbReference type="PANTHER" id="PTHR10806">
    <property type="entry name" value="SIGNAL PEPTIDASE COMPLEX CATALYTIC SUBUNIT SEC11"/>
    <property type="match status" value="1"/>
</dbReference>
<dbReference type="PANTHER" id="PTHR10806:SF6">
    <property type="entry name" value="SIGNAL PEPTIDASE COMPLEX CATALYTIC SUBUNIT SEC11"/>
    <property type="match status" value="1"/>
</dbReference>
<dbReference type="Pfam" id="PF00717">
    <property type="entry name" value="Peptidase_S24"/>
    <property type="match status" value="1"/>
</dbReference>
<dbReference type="PRINTS" id="PR00728">
    <property type="entry name" value="SIGNALPTASE"/>
</dbReference>
<dbReference type="SUPFAM" id="SSF51306">
    <property type="entry name" value="LexA/Signal peptidase"/>
    <property type="match status" value="1"/>
</dbReference>
<dbReference type="PROSITE" id="PS00501">
    <property type="entry name" value="SPASE_I_1"/>
    <property type="match status" value="1"/>
</dbReference>
<dbReference type="PROSITE" id="PS00761">
    <property type="entry name" value="SPASE_I_3"/>
    <property type="match status" value="1"/>
</dbReference>
<sequence length="167" mass="18774">MNIRHQLVQFLNLALVLSSAFMAWKTLSVITNSHSPIVVVLSGSMEPAFQRGDILFLWNRDNHAKVGDVVVYEIKGKSIPIVHRVLREHHNAESKQFLLTKGDNNAVDDLGLYAKKQAYLNQKTDLVGTVKGYLPMVGYITILITENIYFRYTLLGLMGISSLLSNE</sequence>
<accession>Q6BP15</accession>
<proteinExistence type="inferred from homology"/>
<reference key="1">
    <citation type="journal article" date="2004" name="Nature">
        <title>Genome evolution in yeasts.</title>
        <authorList>
            <person name="Dujon B."/>
            <person name="Sherman D."/>
            <person name="Fischer G."/>
            <person name="Durrens P."/>
            <person name="Casaregola S."/>
            <person name="Lafontaine I."/>
            <person name="de Montigny J."/>
            <person name="Marck C."/>
            <person name="Neuveglise C."/>
            <person name="Talla E."/>
            <person name="Goffard N."/>
            <person name="Frangeul L."/>
            <person name="Aigle M."/>
            <person name="Anthouard V."/>
            <person name="Babour A."/>
            <person name="Barbe V."/>
            <person name="Barnay S."/>
            <person name="Blanchin S."/>
            <person name="Beckerich J.-M."/>
            <person name="Beyne E."/>
            <person name="Bleykasten C."/>
            <person name="Boisrame A."/>
            <person name="Boyer J."/>
            <person name="Cattolico L."/>
            <person name="Confanioleri F."/>
            <person name="de Daruvar A."/>
            <person name="Despons L."/>
            <person name="Fabre E."/>
            <person name="Fairhead C."/>
            <person name="Ferry-Dumazet H."/>
            <person name="Groppi A."/>
            <person name="Hantraye F."/>
            <person name="Hennequin C."/>
            <person name="Jauniaux N."/>
            <person name="Joyet P."/>
            <person name="Kachouri R."/>
            <person name="Kerrest A."/>
            <person name="Koszul R."/>
            <person name="Lemaire M."/>
            <person name="Lesur I."/>
            <person name="Ma L."/>
            <person name="Muller H."/>
            <person name="Nicaud J.-M."/>
            <person name="Nikolski M."/>
            <person name="Oztas S."/>
            <person name="Ozier-Kalogeropoulos O."/>
            <person name="Pellenz S."/>
            <person name="Potier S."/>
            <person name="Richard G.-F."/>
            <person name="Straub M.-L."/>
            <person name="Suleau A."/>
            <person name="Swennen D."/>
            <person name="Tekaia F."/>
            <person name="Wesolowski-Louvel M."/>
            <person name="Westhof E."/>
            <person name="Wirth B."/>
            <person name="Zeniou-Meyer M."/>
            <person name="Zivanovic Y."/>
            <person name="Bolotin-Fukuhara M."/>
            <person name="Thierry A."/>
            <person name="Bouchier C."/>
            <person name="Caudron B."/>
            <person name="Scarpelli C."/>
            <person name="Gaillardin C."/>
            <person name="Weissenbach J."/>
            <person name="Wincker P."/>
            <person name="Souciet J.-L."/>
        </authorList>
    </citation>
    <scope>NUCLEOTIDE SEQUENCE [LARGE SCALE GENOMIC DNA]</scope>
    <source>
        <strain>ATCC 36239 / CBS 767 / BCRC 21394 / JCM 1990 / NBRC 0083 / IGC 2968</strain>
    </source>
</reference>
<evidence type="ECO:0000250" key="1">
    <source>
        <dbReference type="UniProtKB" id="P15367"/>
    </source>
</evidence>
<evidence type="ECO:0000250" key="2">
    <source>
        <dbReference type="UniProtKB" id="P67812"/>
    </source>
</evidence>
<evidence type="ECO:0000255" key="3"/>
<evidence type="ECO:0000305" key="4"/>
<comment type="function">
    <text evidence="1 2">Catalytic component of the signal peptidase complex (SPC) which catalyzes the cleavage of N-terminal signal sequences from nascent proteins as they are translocated into the lumen of the endoplasmic reticulum (By similarity). Specifically cleaves N-terminal signal peptides that contain a hydrophobic alpha-helix (h-region) shorter than 18-20 amino acids (By similarity).</text>
</comment>
<comment type="catalytic activity">
    <reaction evidence="1">
        <text>Cleavage of hydrophobic, N-terminal signal or leader sequences from secreted and periplasmic proteins.</text>
        <dbReference type="EC" id="3.4.21.89"/>
    </reaction>
</comment>
<comment type="subunit">
    <text evidence="1 2">Component of the signal peptidase complex (SPC) composed of a catalytic subunit SEC11 and three accessory subunits SPC1, SPC2 and SPC3 (By similarity). The complex induces a local thinning of the ER membrane which is used to measure the length of the signal peptide (SP) h-region of protein substrates. This ensures the selectivity of the complex towards h-regions shorter than 18-20 amino acids (By similarity). SPC associates with the translocon complex (By similarity).</text>
</comment>
<comment type="subcellular location">
    <subcellularLocation>
        <location evidence="1">Endoplasmic reticulum membrane</location>
        <topology evidence="1">Single-pass type II membrane protein</topology>
    </subcellularLocation>
</comment>
<comment type="domain">
    <text evidence="2">The C-terminal short (CTS) helix is essential for catalytic activity. It may be accommodated as a transmembrane helix in the thinned membrane environment of the complex, similarly to the signal peptide in the complex substrates.</text>
</comment>
<comment type="similarity">
    <text evidence="4">Belongs to the peptidase S26B family.</text>
</comment>
<keyword id="KW-0256">Endoplasmic reticulum</keyword>
<keyword id="KW-0378">Hydrolase</keyword>
<keyword id="KW-0472">Membrane</keyword>
<keyword id="KW-0645">Protease</keyword>
<keyword id="KW-1185">Reference proteome</keyword>
<keyword id="KW-0735">Signal-anchor</keyword>
<keyword id="KW-0812">Transmembrane</keyword>
<keyword id="KW-1133">Transmembrane helix</keyword>
<organism>
    <name type="scientific">Debaryomyces hansenii (strain ATCC 36239 / CBS 767 / BCRC 21394 / JCM 1990 / NBRC 0083 / IGC 2968)</name>
    <name type="common">Yeast</name>
    <name type="synonym">Torulaspora hansenii</name>
    <dbReference type="NCBI Taxonomy" id="284592"/>
    <lineage>
        <taxon>Eukaryota</taxon>
        <taxon>Fungi</taxon>
        <taxon>Dikarya</taxon>
        <taxon>Ascomycota</taxon>
        <taxon>Saccharomycotina</taxon>
        <taxon>Pichiomycetes</taxon>
        <taxon>Debaryomycetaceae</taxon>
        <taxon>Debaryomyces</taxon>
    </lineage>
</organism>
<gene>
    <name type="primary">SEC11</name>
    <name type="ordered locus">DEHA2E17314g</name>
</gene>